<reference key="1">
    <citation type="journal article" date="2005" name="Proc. Natl. Acad. Sci. U.S.A.">
        <title>Whole genome sequence of Staphylococcus saprophyticus reveals the pathogenesis of uncomplicated urinary tract infection.</title>
        <authorList>
            <person name="Kuroda M."/>
            <person name="Yamashita A."/>
            <person name="Hirakawa H."/>
            <person name="Kumano M."/>
            <person name="Morikawa K."/>
            <person name="Higashide M."/>
            <person name="Maruyama A."/>
            <person name="Inose Y."/>
            <person name="Matoba K."/>
            <person name="Toh H."/>
            <person name="Kuhara S."/>
            <person name="Hattori M."/>
            <person name="Ohta T."/>
        </authorList>
    </citation>
    <scope>NUCLEOTIDE SEQUENCE [LARGE SCALE GENOMIC DNA]</scope>
    <source>
        <strain>ATCC 15305 / DSM 20229 / NCIMB 8711 / NCTC 7292 / S-41</strain>
    </source>
</reference>
<proteinExistence type="inferred from homology"/>
<comment type="function">
    <text evidence="1">Catalyzes the hydrolytic cleavage of the carbon-nitrogen bond in imidazolone-5-propanoate to yield N-formimidoyl-L-glutamate. It is the third step in the universal histidine degradation pathway.</text>
</comment>
<comment type="catalytic activity">
    <reaction evidence="1">
        <text>4-imidazolone-5-propanoate + H2O = N-formimidoyl-L-glutamate</text>
        <dbReference type="Rhea" id="RHEA:23660"/>
        <dbReference type="ChEBI" id="CHEBI:15377"/>
        <dbReference type="ChEBI" id="CHEBI:58928"/>
        <dbReference type="ChEBI" id="CHEBI:77893"/>
        <dbReference type="EC" id="3.5.2.7"/>
    </reaction>
</comment>
<comment type="cofactor">
    <cofactor evidence="1">
        <name>Zn(2+)</name>
        <dbReference type="ChEBI" id="CHEBI:29105"/>
    </cofactor>
    <cofactor evidence="1">
        <name>Fe(3+)</name>
        <dbReference type="ChEBI" id="CHEBI:29034"/>
    </cofactor>
    <text evidence="1">Binds 1 zinc or iron ion per subunit.</text>
</comment>
<comment type="pathway">
    <text evidence="1">Amino-acid degradation; L-histidine degradation into L-glutamate; N-formimidoyl-L-glutamate from L-histidine: step 3/3.</text>
</comment>
<comment type="subcellular location">
    <subcellularLocation>
        <location evidence="1">Cytoplasm</location>
    </subcellularLocation>
</comment>
<comment type="similarity">
    <text evidence="1">Belongs to the metallo-dependent hydrolases superfamily. HutI family.</text>
</comment>
<name>HUTI_STAS1</name>
<keyword id="KW-0963">Cytoplasm</keyword>
<keyword id="KW-0369">Histidine metabolism</keyword>
<keyword id="KW-0378">Hydrolase</keyword>
<keyword id="KW-0408">Iron</keyword>
<keyword id="KW-0479">Metal-binding</keyword>
<keyword id="KW-1185">Reference proteome</keyword>
<keyword id="KW-0862">Zinc</keyword>
<accession>Q49ZQ6</accession>
<gene>
    <name evidence="1" type="primary">hutI</name>
    <name type="ordered locus">SSP0573</name>
</gene>
<evidence type="ECO:0000255" key="1">
    <source>
        <dbReference type="HAMAP-Rule" id="MF_00372"/>
    </source>
</evidence>
<organism>
    <name type="scientific">Staphylococcus saprophyticus subsp. saprophyticus (strain ATCC 15305 / DSM 20229 / NCIMB 8711 / NCTC 7292 / S-41)</name>
    <dbReference type="NCBI Taxonomy" id="342451"/>
    <lineage>
        <taxon>Bacteria</taxon>
        <taxon>Bacillati</taxon>
        <taxon>Bacillota</taxon>
        <taxon>Bacilli</taxon>
        <taxon>Bacillales</taxon>
        <taxon>Staphylococcaceae</taxon>
        <taxon>Staphylococcus</taxon>
    </lineage>
</organism>
<dbReference type="EC" id="3.5.2.7" evidence="1"/>
<dbReference type="EMBL" id="AP008934">
    <property type="protein sequence ID" value="BAE17718.1"/>
    <property type="molecule type" value="Genomic_DNA"/>
</dbReference>
<dbReference type="RefSeq" id="WP_011302521.1">
    <property type="nucleotide sequence ID" value="NC_007350.1"/>
</dbReference>
<dbReference type="SMR" id="Q49ZQ6"/>
<dbReference type="GeneID" id="3616866"/>
<dbReference type="KEGG" id="ssp:SSP0573"/>
<dbReference type="PATRIC" id="fig|342451.11.peg.579"/>
<dbReference type="eggNOG" id="COG1228">
    <property type="taxonomic scope" value="Bacteria"/>
</dbReference>
<dbReference type="HOGENOM" id="CLU_041647_0_1_9"/>
<dbReference type="OrthoDB" id="9776455at2"/>
<dbReference type="UniPathway" id="UPA00379">
    <property type="reaction ID" value="UER00551"/>
</dbReference>
<dbReference type="Proteomes" id="UP000006371">
    <property type="component" value="Chromosome"/>
</dbReference>
<dbReference type="GO" id="GO:0005737">
    <property type="term" value="C:cytoplasm"/>
    <property type="evidence" value="ECO:0007669"/>
    <property type="project" value="UniProtKB-SubCell"/>
</dbReference>
<dbReference type="GO" id="GO:0050480">
    <property type="term" value="F:imidazolonepropionase activity"/>
    <property type="evidence" value="ECO:0007669"/>
    <property type="project" value="UniProtKB-UniRule"/>
</dbReference>
<dbReference type="GO" id="GO:0005506">
    <property type="term" value="F:iron ion binding"/>
    <property type="evidence" value="ECO:0007669"/>
    <property type="project" value="UniProtKB-UniRule"/>
</dbReference>
<dbReference type="GO" id="GO:0008270">
    <property type="term" value="F:zinc ion binding"/>
    <property type="evidence" value="ECO:0007669"/>
    <property type="project" value="UniProtKB-UniRule"/>
</dbReference>
<dbReference type="GO" id="GO:0019556">
    <property type="term" value="P:L-histidine catabolic process to glutamate and formamide"/>
    <property type="evidence" value="ECO:0007669"/>
    <property type="project" value="UniProtKB-UniPathway"/>
</dbReference>
<dbReference type="GO" id="GO:0019557">
    <property type="term" value="P:L-histidine catabolic process to glutamate and formate"/>
    <property type="evidence" value="ECO:0007669"/>
    <property type="project" value="UniProtKB-UniPathway"/>
</dbReference>
<dbReference type="CDD" id="cd01296">
    <property type="entry name" value="Imidazolone-5PH"/>
    <property type="match status" value="1"/>
</dbReference>
<dbReference type="FunFam" id="3.20.20.140:FF:000007">
    <property type="entry name" value="Imidazolonepropionase"/>
    <property type="match status" value="1"/>
</dbReference>
<dbReference type="Gene3D" id="3.20.20.140">
    <property type="entry name" value="Metal-dependent hydrolases"/>
    <property type="match status" value="1"/>
</dbReference>
<dbReference type="Gene3D" id="2.30.40.10">
    <property type="entry name" value="Urease, subunit C, domain 1"/>
    <property type="match status" value="1"/>
</dbReference>
<dbReference type="HAMAP" id="MF_00372">
    <property type="entry name" value="HutI"/>
    <property type="match status" value="1"/>
</dbReference>
<dbReference type="InterPro" id="IPR006680">
    <property type="entry name" value="Amidohydro-rel"/>
</dbReference>
<dbReference type="InterPro" id="IPR005920">
    <property type="entry name" value="HutI"/>
</dbReference>
<dbReference type="InterPro" id="IPR011059">
    <property type="entry name" value="Metal-dep_hydrolase_composite"/>
</dbReference>
<dbReference type="InterPro" id="IPR032466">
    <property type="entry name" value="Metal_Hydrolase"/>
</dbReference>
<dbReference type="NCBIfam" id="TIGR01224">
    <property type="entry name" value="hutI"/>
    <property type="match status" value="1"/>
</dbReference>
<dbReference type="PANTHER" id="PTHR42752">
    <property type="entry name" value="IMIDAZOLONEPROPIONASE"/>
    <property type="match status" value="1"/>
</dbReference>
<dbReference type="PANTHER" id="PTHR42752:SF1">
    <property type="entry name" value="IMIDAZOLONEPROPIONASE-RELATED"/>
    <property type="match status" value="1"/>
</dbReference>
<dbReference type="Pfam" id="PF01979">
    <property type="entry name" value="Amidohydro_1"/>
    <property type="match status" value="1"/>
</dbReference>
<dbReference type="SUPFAM" id="SSF51338">
    <property type="entry name" value="Composite domain of metallo-dependent hydrolases"/>
    <property type="match status" value="1"/>
</dbReference>
<dbReference type="SUPFAM" id="SSF51556">
    <property type="entry name" value="Metallo-dependent hydrolases"/>
    <property type="match status" value="1"/>
</dbReference>
<feature type="chain" id="PRO_0000160964" description="Imidazolonepropionase">
    <location>
        <begin position="1"/>
        <end position="412"/>
    </location>
</feature>
<feature type="binding site" evidence="1">
    <location>
        <position position="76"/>
    </location>
    <ligand>
        <name>Fe(3+)</name>
        <dbReference type="ChEBI" id="CHEBI:29034"/>
    </ligand>
</feature>
<feature type="binding site" evidence="1">
    <location>
        <position position="76"/>
    </location>
    <ligand>
        <name>Zn(2+)</name>
        <dbReference type="ChEBI" id="CHEBI:29105"/>
    </ligand>
</feature>
<feature type="binding site" evidence="1">
    <location>
        <position position="78"/>
    </location>
    <ligand>
        <name>Fe(3+)</name>
        <dbReference type="ChEBI" id="CHEBI:29034"/>
    </ligand>
</feature>
<feature type="binding site" evidence="1">
    <location>
        <position position="78"/>
    </location>
    <ligand>
        <name>Zn(2+)</name>
        <dbReference type="ChEBI" id="CHEBI:29105"/>
    </ligand>
</feature>
<feature type="binding site" evidence="1">
    <location>
        <position position="85"/>
    </location>
    <ligand>
        <name>4-imidazolone-5-propanoate</name>
        <dbReference type="ChEBI" id="CHEBI:77893"/>
    </ligand>
</feature>
<feature type="binding site" evidence="1">
    <location>
        <position position="148"/>
    </location>
    <ligand>
        <name>4-imidazolone-5-propanoate</name>
        <dbReference type="ChEBI" id="CHEBI:77893"/>
    </ligand>
</feature>
<feature type="binding site" evidence="1">
    <location>
        <position position="148"/>
    </location>
    <ligand>
        <name>N-formimidoyl-L-glutamate</name>
        <dbReference type="ChEBI" id="CHEBI:58928"/>
    </ligand>
</feature>
<feature type="binding site" evidence="1">
    <location>
        <position position="181"/>
    </location>
    <ligand>
        <name>4-imidazolone-5-propanoate</name>
        <dbReference type="ChEBI" id="CHEBI:77893"/>
    </ligand>
</feature>
<feature type="binding site" evidence="1">
    <location>
        <position position="242"/>
    </location>
    <ligand>
        <name>Fe(3+)</name>
        <dbReference type="ChEBI" id="CHEBI:29034"/>
    </ligand>
</feature>
<feature type="binding site" evidence="1">
    <location>
        <position position="242"/>
    </location>
    <ligand>
        <name>Zn(2+)</name>
        <dbReference type="ChEBI" id="CHEBI:29105"/>
    </ligand>
</feature>
<feature type="binding site" evidence="1">
    <location>
        <position position="245"/>
    </location>
    <ligand>
        <name>4-imidazolone-5-propanoate</name>
        <dbReference type="ChEBI" id="CHEBI:77893"/>
    </ligand>
</feature>
<feature type="binding site" evidence="1">
    <location>
        <position position="317"/>
    </location>
    <ligand>
        <name>Fe(3+)</name>
        <dbReference type="ChEBI" id="CHEBI:29034"/>
    </ligand>
</feature>
<feature type="binding site" evidence="1">
    <location>
        <position position="317"/>
    </location>
    <ligand>
        <name>Zn(2+)</name>
        <dbReference type="ChEBI" id="CHEBI:29105"/>
    </ligand>
</feature>
<feature type="binding site" evidence="1">
    <location>
        <position position="319"/>
    </location>
    <ligand>
        <name>N-formimidoyl-L-glutamate</name>
        <dbReference type="ChEBI" id="CHEBI:58928"/>
    </ligand>
</feature>
<feature type="binding site" evidence="1">
    <location>
        <position position="321"/>
    </location>
    <ligand>
        <name>N-formimidoyl-L-glutamate</name>
        <dbReference type="ChEBI" id="CHEBI:58928"/>
    </ligand>
</feature>
<feature type="binding site" evidence="1">
    <location>
        <position position="322"/>
    </location>
    <ligand>
        <name>4-imidazolone-5-propanoate</name>
        <dbReference type="ChEBI" id="CHEBI:77893"/>
    </ligand>
</feature>
<protein>
    <recommendedName>
        <fullName evidence="1">Imidazolonepropionase</fullName>
        <ecNumber evidence="1">3.5.2.7</ecNumber>
    </recommendedName>
    <alternativeName>
        <fullName evidence="1">Imidazolone-5-propionate hydrolase</fullName>
    </alternativeName>
</protein>
<sequence>MNDLIIQNIKELILPKSTERPLKGKELGELNITENGTVVVKNGKIVYAGEHSDAYEATETIDATDKVVSPALVEAHTHLVHGGSREHEMSLKRQGVSYLEILEQGGGILSTVEATRKATEEALFKKAEKNLLTMMEHGVLAVESKSGYGLDKENELKQLRVSNRLAEKYNLDMKHTFLGPHAVPKDAESNQDFLQEMIDLLPEVKAYADFADIFCETGVFTVEESKKYMEAAKALGFDVKIHADEIDPLGGLELAIDENAISADHLVASSTEGKEKLKNSDTVAVLLPGTTFYLGKESYADARGMLDNDGAIAIATDFNPGSCVTNNLQLVMSIAALKLKLSPNEIWNAVTVNAAKAIDIDAGTINQGDKANIVIWDAPNHEYIPYHYGINHAEKVIKDGKVLIDNRIKLEQ</sequence>